<reference key="1">
    <citation type="submission" date="2006-08" db="EMBL/GenBank/DDBJ databases">
        <title>Complete sequence of chromosome 2 of Burkholderia cenocepacia HI2424.</title>
        <authorList>
            <person name="Copeland A."/>
            <person name="Lucas S."/>
            <person name="Lapidus A."/>
            <person name="Barry K."/>
            <person name="Detter J.C."/>
            <person name="Glavina del Rio T."/>
            <person name="Hammon N."/>
            <person name="Israni S."/>
            <person name="Pitluck S."/>
            <person name="Chain P."/>
            <person name="Malfatti S."/>
            <person name="Shin M."/>
            <person name="Vergez L."/>
            <person name="Schmutz J."/>
            <person name="Larimer F."/>
            <person name="Land M."/>
            <person name="Hauser L."/>
            <person name="Kyrpides N."/>
            <person name="Kim E."/>
            <person name="LiPuma J.J."/>
            <person name="Gonzalez C.F."/>
            <person name="Konstantinidis K."/>
            <person name="Tiedje J.M."/>
            <person name="Richardson P."/>
        </authorList>
    </citation>
    <scope>NUCLEOTIDE SEQUENCE [LARGE SCALE GENOMIC DNA]</scope>
    <source>
        <strain>HI2424</strain>
    </source>
</reference>
<organism>
    <name type="scientific">Burkholderia cenocepacia (strain HI2424)</name>
    <dbReference type="NCBI Taxonomy" id="331272"/>
    <lineage>
        <taxon>Bacteria</taxon>
        <taxon>Pseudomonadati</taxon>
        <taxon>Pseudomonadota</taxon>
        <taxon>Betaproteobacteria</taxon>
        <taxon>Burkholderiales</taxon>
        <taxon>Burkholderiaceae</taxon>
        <taxon>Burkholderia</taxon>
        <taxon>Burkholderia cepacia complex</taxon>
    </lineage>
</organism>
<evidence type="ECO:0000255" key="1">
    <source>
        <dbReference type="HAMAP-Rule" id="MF_01110"/>
    </source>
</evidence>
<protein>
    <recommendedName>
        <fullName evidence="1">N-acetyl-gamma-glutamyl-phosphate reductase</fullName>
        <shortName evidence="1">AGPR</shortName>
        <ecNumber evidence="1">1.2.1.38</ecNumber>
    </recommendedName>
    <alternativeName>
        <fullName evidence="1">N-acetyl-glutamate semialdehyde dehydrogenase</fullName>
        <shortName evidence="1">NAGSA dehydrogenase</shortName>
    </alternativeName>
</protein>
<proteinExistence type="inferred from homology"/>
<comment type="function">
    <text evidence="1">Catalyzes the NADPH-dependent reduction of N-acetyl-5-glutamyl phosphate to yield N-acetyl-L-glutamate 5-semialdehyde.</text>
</comment>
<comment type="catalytic activity">
    <reaction evidence="1">
        <text>N-acetyl-L-glutamate 5-semialdehyde + phosphate + NADP(+) = N-acetyl-L-glutamyl 5-phosphate + NADPH + H(+)</text>
        <dbReference type="Rhea" id="RHEA:21588"/>
        <dbReference type="ChEBI" id="CHEBI:15378"/>
        <dbReference type="ChEBI" id="CHEBI:29123"/>
        <dbReference type="ChEBI" id="CHEBI:43474"/>
        <dbReference type="ChEBI" id="CHEBI:57783"/>
        <dbReference type="ChEBI" id="CHEBI:57936"/>
        <dbReference type="ChEBI" id="CHEBI:58349"/>
        <dbReference type="EC" id="1.2.1.38"/>
    </reaction>
</comment>
<comment type="pathway">
    <text evidence="1">Amino-acid biosynthesis; L-arginine biosynthesis; N(2)-acetyl-L-ornithine from L-glutamate: step 3/4.</text>
</comment>
<comment type="subcellular location">
    <subcellularLocation>
        <location evidence="1">Cytoplasm</location>
    </subcellularLocation>
</comment>
<comment type="similarity">
    <text evidence="1">Belongs to the NAGSA dehydrogenase family. Type 2 subfamily.</text>
</comment>
<gene>
    <name evidence="1" type="primary">argC</name>
    <name type="ordered locus">Bcen2424_5709</name>
</gene>
<feature type="chain" id="PRO_1000137112" description="N-acetyl-gamma-glutamyl-phosphate reductase">
    <location>
        <begin position="1"/>
        <end position="313"/>
    </location>
</feature>
<feature type="active site" evidence="1">
    <location>
        <position position="117"/>
    </location>
</feature>
<dbReference type="EC" id="1.2.1.38" evidence="1"/>
<dbReference type="EMBL" id="CP000459">
    <property type="protein sequence ID" value="ABK12442.1"/>
    <property type="molecule type" value="Genomic_DNA"/>
</dbReference>
<dbReference type="RefSeq" id="WP_011548740.1">
    <property type="nucleotide sequence ID" value="NC_008543.1"/>
</dbReference>
<dbReference type="SMR" id="A0B466"/>
<dbReference type="KEGG" id="bch:Bcen2424_5709"/>
<dbReference type="HOGENOM" id="CLU_077118_0_0_4"/>
<dbReference type="UniPathway" id="UPA00068">
    <property type="reaction ID" value="UER00108"/>
</dbReference>
<dbReference type="GO" id="GO:0005737">
    <property type="term" value="C:cytoplasm"/>
    <property type="evidence" value="ECO:0007669"/>
    <property type="project" value="UniProtKB-SubCell"/>
</dbReference>
<dbReference type="GO" id="GO:0003942">
    <property type="term" value="F:N-acetyl-gamma-glutamyl-phosphate reductase activity"/>
    <property type="evidence" value="ECO:0007669"/>
    <property type="project" value="UniProtKB-UniRule"/>
</dbReference>
<dbReference type="GO" id="GO:0051287">
    <property type="term" value="F:NAD binding"/>
    <property type="evidence" value="ECO:0007669"/>
    <property type="project" value="InterPro"/>
</dbReference>
<dbReference type="GO" id="GO:0006526">
    <property type="term" value="P:L-arginine biosynthetic process"/>
    <property type="evidence" value="ECO:0007669"/>
    <property type="project" value="UniProtKB-UniRule"/>
</dbReference>
<dbReference type="CDD" id="cd23935">
    <property type="entry name" value="AGPR_2_C"/>
    <property type="match status" value="1"/>
</dbReference>
<dbReference type="CDD" id="cd17896">
    <property type="entry name" value="AGPR_2_N"/>
    <property type="match status" value="1"/>
</dbReference>
<dbReference type="Gene3D" id="3.30.360.10">
    <property type="entry name" value="Dihydrodipicolinate Reductase, domain 2"/>
    <property type="match status" value="1"/>
</dbReference>
<dbReference type="Gene3D" id="3.40.50.720">
    <property type="entry name" value="NAD(P)-binding Rossmann-like Domain"/>
    <property type="match status" value="1"/>
</dbReference>
<dbReference type="HAMAP" id="MF_01110">
    <property type="entry name" value="ArgC_type2"/>
    <property type="match status" value="1"/>
</dbReference>
<dbReference type="InterPro" id="IPR010136">
    <property type="entry name" value="AGPR_type-2"/>
</dbReference>
<dbReference type="InterPro" id="IPR036291">
    <property type="entry name" value="NAD(P)-bd_dom_sf"/>
</dbReference>
<dbReference type="InterPro" id="IPR050085">
    <property type="entry name" value="NAGSA_dehydrogenase"/>
</dbReference>
<dbReference type="InterPro" id="IPR000534">
    <property type="entry name" value="Semialdehyde_DH_NAD-bd"/>
</dbReference>
<dbReference type="NCBIfam" id="TIGR01851">
    <property type="entry name" value="argC_other"/>
    <property type="match status" value="1"/>
</dbReference>
<dbReference type="PANTHER" id="PTHR32338:SF10">
    <property type="entry name" value="N-ACETYL-GAMMA-GLUTAMYL-PHOSPHATE REDUCTASE, CHLOROPLASTIC-RELATED"/>
    <property type="match status" value="1"/>
</dbReference>
<dbReference type="PANTHER" id="PTHR32338">
    <property type="entry name" value="N-ACETYL-GAMMA-GLUTAMYL-PHOSPHATE REDUCTASE, CHLOROPLASTIC-RELATED-RELATED"/>
    <property type="match status" value="1"/>
</dbReference>
<dbReference type="Pfam" id="PF01118">
    <property type="entry name" value="Semialdhyde_dh"/>
    <property type="match status" value="1"/>
</dbReference>
<dbReference type="Pfam" id="PF22698">
    <property type="entry name" value="Semialdhyde_dhC_1"/>
    <property type="match status" value="1"/>
</dbReference>
<dbReference type="SMART" id="SM00859">
    <property type="entry name" value="Semialdhyde_dh"/>
    <property type="match status" value="1"/>
</dbReference>
<dbReference type="SUPFAM" id="SSF55347">
    <property type="entry name" value="Glyceraldehyde-3-phosphate dehydrogenase-like, C-terminal domain"/>
    <property type="match status" value="1"/>
</dbReference>
<dbReference type="SUPFAM" id="SSF51735">
    <property type="entry name" value="NAD(P)-binding Rossmann-fold domains"/>
    <property type="match status" value="1"/>
</dbReference>
<keyword id="KW-0028">Amino-acid biosynthesis</keyword>
<keyword id="KW-0055">Arginine biosynthesis</keyword>
<keyword id="KW-0963">Cytoplasm</keyword>
<keyword id="KW-0521">NADP</keyword>
<keyword id="KW-0560">Oxidoreductase</keyword>
<name>ARGC_BURCH</name>
<sequence>MSFPTVFIDGDQGTTGLQIHARLRDRTDVRLLTLPAAERKEAARRADALNACDIAILCLPDAAAREAVGFIRNPAVRVIDASSAHRTQPDWVYGFPEMADGHAHEIAHAKRVTNPGCYPTGAIGLLRPLLQAGLLPRDYPVSIHAVSGYSGGGRAAVDAFESGDAAARALPLQVYGLALAHKHVPEIRQHAGLAHRPFFVPAYGAYRQGIVLTIPIELRLLPAGVTGERLHACLAHHYADARHVDVMPLADARAATHLDPQALNGTNDLRLGVFVNANGGQVLLSAVFDNLGKGASGAAVQNLDLMLGARHAA</sequence>
<accession>A0B466</accession>